<reference key="1">
    <citation type="submission" date="2006-06" db="EMBL/GenBank/DDBJ databases">
        <title>Complete sequence of Pseudoalteromonas atlantica T6c.</title>
        <authorList>
            <consortium name="US DOE Joint Genome Institute"/>
            <person name="Copeland A."/>
            <person name="Lucas S."/>
            <person name="Lapidus A."/>
            <person name="Barry K."/>
            <person name="Detter J.C."/>
            <person name="Glavina del Rio T."/>
            <person name="Hammon N."/>
            <person name="Israni S."/>
            <person name="Dalin E."/>
            <person name="Tice H."/>
            <person name="Pitluck S."/>
            <person name="Saunders E."/>
            <person name="Brettin T."/>
            <person name="Bruce D."/>
            <person name="Han C."/>
            <person name="Tapia R."/>
            <person name="Gilna P."/>
            <person name="Schmutz J."/>
            <person name="Larimer F."/>
            <person name="Land M."/>
            <person name="Hauser L."/>
            <person name="Kyrpides N."/>
            <person name="Kim E."/>
            <person name="Karls A.C."/>
            <person name="Bartlett D."/>
            <person name="Higgins B.P."/>
            <person name="Richardson P."/>
        </authorList>
    </citation>
    <scope>NUCLEOTIDE SEQUENCE [LARGE SCALE GENOMIC DNA]</scope>
    <source>
        <strain>T6c / ATCC BAA-1087</strain>
    </source>
</reference>
<evidence type="ECO:0000255" key="1">
    <source>
        <dbReference type="HAMAP-Rule" id="MF_00272"/>
    </source>
</evidence>
<evidence type="ECO:0000255" key="2">
    <source>
        <dbReference type="PROSITE-ProRule" id="PRU01066"/>
    </source>
</evidence>
<gene>
    <name evidence="1" type="primary">gcvH</name>
    <name type="ordered locus">Patl_3591</name>
</gene>
<proteinExistence type="inferred from homology"/>
<feature type="chain" id="PRO_0000302419" description="Glycine cleavage system H protein">
    <location>
        <begin position="1"/>
        <end position="129"/>
    </location>
</feature>
<feature type="domain" description="Lipoyl-binding" evidence="2">
    <location>
        <begin position="24"/>
        <end position="106"/>
    </location>
</feature>
<feature type="modified residue" description="N6-lipoyllysine" evidence="1">
    <location>
        <position position="65"/>
    </location>
</feature>
<organism>
    <name type="scientific">Pseudoalteromonas atlantica (strain T6c / ATCC BAA-1087)</name>
    <dbReference type="NCBI Taxonomy" id="3042615"/>
    <lineage>
        <taxon>Bacteria</taxon>
        <taxon>Pseudomonadati</taxon>
        <taxon>Pseudomonadota</taxon>
        <taxon>Gammaproteobacteria</taxon>
        <taxon>Alteromonadales</taxon>
        <taxon>Alteromonadaceae</taxon>
        <taxon>Paraglaciecola</taxon>
    </lineage>
</organism>
<keyword id="KW-0450">Lipoyl</keyword>
<accession>Q15PU5</accession>
<name>GCSH_PSEA6</name>
<sequence length="129" mass="13818">MSNIPSDLRYATTHEWVRPEGDGTFTVGISEHAQELLGDMVFVELPDVGATVSAGDDIAVAESVKAASDVYAPIGGEIVGVNEDLEDSPELVNSDPYGDGWLFRIKADDADEVEGLLDAEGYENSIEEE</sequence>
<dbReference type="EMBL" id="CP000388">
    <property type="protein sequence ID" value="ABG42093.1"/>
    <property type="molecule type" value="Genomic_DNA"/>
</dbReference>
<dbReference type="RefSeq" id="WP_011576318.1">
    <property type="nucleotide sequence ID" value="NC_008228.1"/>
</dbReference>
<dbReference type="SMR" id="Q15PU5"/>
<dbReference type="STRING" id="342610.Patl_3591"/>
<dbReference type="KEGG" id="pat:Patl_3591"/>
<dbReference type="eggNOG" id="COG0509">
    <property type="taxonomic scope" value="Bacteria"/>
</dbReference>
<dbReference type="HOGENOM" id="CLU_097408_2_0_6"/>
<dbReference type="OrthoDB" id="9796712at2"/>
<dbReference type="Proteomes" id="UP000001981">
    <property type="component" value="Chromosome"/>
</dbReference>
<dbReference type="GO" id="GO:0005829">
    <property type="term" value="C:cytosol"/>
    <property type="evidence" value="ECO:0007669"/>
    <property type="project" value="TreeGrafter"/>
</dbReference>
<dbReference type="GO" id="GO:0005960">
    <property type="term" value="C:glycine cleavage complex"/>
    <property type="evidence" value="ECO:0007669"/>
    <property type="project" value="InterPro"/>
</dbReference>
<dbReference type="GO" id="GO:0019464">
    <property type="term" value="P:glycine decarboxylation via glycine cleavage system"/>
    <property type="evidence" value="ECO:0007669"/>
    <property type="project" value="UniProtKB-UniRule"/>
</dbReference>
<dbReference type="CDD" id="cd06848">
    <property type="entry name" value="GCS_H"/>
    <property type="match status" value="1"/>
</dbReference>
<dbReference type="FunFam" id="2.40.50.100:FF:000011">
    <property type="entry name" value="Glycine cleavage system H protein"/>
    <property type="match status" value="1"/>
</dbReference>
<dbReference type="Gene3D" id="2.40.50.100">
    <property type="match status" value="1"/>
</dbReference>
<dbReference type="HAMAP" id="MF_00272">
    <property type="entry name" value="GcvH"/>
    <property type="match status" value="1"/>
</dbReference>
<dbReference type="InterPro" id="IPR003016">
    <property type="entry name" value="2-oxoA_DH_lipoyl-BS"/>
</dbReference>
<dbReference type="InterPro" id="IPR000089">
    <property type="entry name" value="Biotin_lipoyl"/>
</dbReference>
<dbReference type="InterPro" id="IPR002930">
    <property type="entry name" value="GCV_H"/>
</dbReference>
<dbReference type="InterPro" id="IPR033753">
    <property type="entry name" value="GCV_H/Fam206"/>
</dbReference>
<dbReference type="InterPro" id="IPR017453">
    <property type="entry name" value="GCV_H_sub"/>
</dbReference>
<dbReference type="InterPro" id="IPR011053">
    <property type="entry name" value="Single_hybrid_motif"/>
</dbReference>
<dbReference type="NCBIfam" id="TIGR00527">
    <property type="entry name" value="gcvH"/>
    <property type="match status" value="1"/>
</dbReference>
<dbReference type="NCBIfam" id="NF002270">
    <property type="entry name" value="PRK01202.1"/>
    <property type="match status" value="1"/>
</dbReference>
<dbReference type="PANTHER" id="PTHR11715">
    <property type="entry name" value="GLYCINE CLEAVAGE SYSTEM H PROTEIN"/>
    <property type="match status" value="1"/>
</dbReference>
<dbReference type="PANTHER" id="PTHR11715:SF3">
    <property type="entry name" value="GLYCINE CLEAVAGE SYSTEM H PROTEIN-RELATED"/>
    <property type="match status" value="1"/>
</dbReference>
<dbReference type="Pfam" id="PF01597">
    <property type="entry name" value="GCV_H"/>
    <property type="match status" value="1"/>
</dbReference>
<dbReference type="SUPFAM" id="SSF51230">
    <property type="entry name" value="Single hybrid motif"/>
    <property type="match status" value="1"/>
</dbReference>
<dbReference type="PROSITE" id="PS50968">
    <property type="entry name" value="BIOTINYL_LIPOYL"/>
    <property type="match status" value="1"/>
</dbReference>
<dbReference type="PROSITE" id="PS00189">
    <property type="entry name" value="LIPOYL"/>
    <property type="match status" value="1"/>
</dbReference>
<comment type="function">
    <text evidence="1">The glycine cleavage system catalyzes the degradation of glycine. The H protein shuttles the methylamine group of glycine from the P protein to the T protein.</text>
</comment>
<comment type="cofactor">
    <cofactor evidence="1">
        <name>(R)-lipoate</name>
        <dbReference type="ChEBI" id="CHEBI:83088"/>
    </cofactor>
    <text evidence="1">Binds 1 lipoyl cofactor covalently.</text>
</comment>
<comment type="subunit">
    <text evidence="1">The glycine cleavage system is composed of four proteins: P, T, L and H.</text>
</comment>
<comment type="similarity">
    <text evidence="1">Belongs to the GcvH family.</text>
</comment>
<protein>
    <recommendedName>
        <fullName evidence="1">Glycine cleavage system H protein</fullName>
    </recommendedName>
</protein>